<sequence length="390" mass="43669">MTIRKMTELNITEKRILIRSDLNVPIENGIIQSDARILAALPTIELALQKKAKVIIMSHLGRPKEGYYTKKYSLFPIFEYFKKKFNNTKIYFSNNFLDGIKLNPGEIALLENTRFNKGELNNDEQLSKKYSDLCDIFVMDAFGSSHRMQSSTYGIGKFVKIACAGLLLISEIDALKKALKKPKRPMVAIVGGSKVSTKFNVLNKLSKIADTIIVGGGIANTFLAIDYKIGKSLYEPDFVFEAKKLRDKYNIIVPIDSRVGKNFCKNEQAIIKSPDNIKEDEEIMDFGDESIKKIISIITQSQTIMWNGPVGVFEFPNFRKGTEMIAKTIANSNAFSIAGGGDTLSVIDMFNIKNNISYISTGGGAFLEFIEGKKLPAIQMLEENFKNKSK</sequence>
<comment type="catalytic activity">
    <reaction evidence="1">
        <text>(2R)-3-phosphoglycerate + ATP = (2R)-3-phospho-glyceroyl phosphate + ADP</text>
        <dbReference type="Rhea" id="RHEA:14801"/>
        <dbReference type="ChEBI" id="CHEBI:30616"/>
        <dbReference type="ChEBI" id="CHEBI:57604"/>
        <dbReference type="ChEBI" id="CHEBI:58272"/>
        <dbReference type="ChEBI" id="CHEBI:456216"/>
        <dbReference type="EC" id="2.7.2.3"/>
    </reaction>
</comment>
<comment type="pathway">
    <text evidence="1">Carbohydrate degradation; glycolysis; pyruvate from D-glyceraldehyde 3-phosphate: step 2/5.</text>
</comment>
<comment type="subunit">
    <text evidence="1">Monomer.</text>
</comment>
<comment type="subcellular location">
    <subcellularLocation>
        <location evidence="1">Cytoplasm</location>
    </subcellularLocation>
</comment>
<comment type="similarity">
    <text evidence="1">Belongs to the phosphoglycerate kinase family.</text>
</comment>
<evidence type="ECO:0000255" key="1">
    <source>
        <dbReference type="HAMAP-Rule" id="MF_00145"/>
    </source>
</evidence>
<accession>B8D9M8</accession>
<name>PGK_BUCA5</name>
<feature type="chain" id="PRO_1000192811" description="Phosphoglycerate kinase">
    <location>
        <begin position="1"/>
        <end position="390"/>
    </location>
</feature>
<feature type="binding site" evidence="1">
    <location>
        <begin position="21"/>
        <end position="23"/>
    </location>
    <ligand>
        <name>substrate</name>
    </ligand>
</feature>
<feature type="binding site" evidence="1">
    <location>
        <position position="36"/>
    </location>
    <ligand>
        <name>substrate</name>
    </ligand>
</feature>
<feature type="binding site" evidence="1">
    <location>
        <begin position="59"/>
        <end position="62"/>
    </location>
    <ligand>
        <name>substrate</name>
    </ligand>
</feature>
<feature type="binding site" evidence="1">
    <location>
        <position position="114"/>
    </location>
    <ligand>
        <name>substrate</name>
    </ligand>
</feature>
<feature type="binding site" evidence="1">
    <location>
        <position position="147"/>
    </location>
    <ligand>
        <name>substrate</name>
    </ligand>
</feature>
<feature type="binding site" evidence="1">
    <location>
        <position position="198"/>
    </location>
    <ligand>
        <name>ATP</name>
        <dbReference type="ChEBI" id="CHEBI:30616"/>
    </ligand>
</feature>
<feature type="binding site" evidence="1">
    <location>
        <position position="314"/>
    </location>
    <ligand>
        <name>ATP</name>
        <dbReference type="ChEBI" id="CHEBI:30616"/>
    </ligand>
</feature>
<feature type="binding site" evidence="1">
    <location>
        <begin position="340"/>
        <end position="343"/>
    </location>
    <ligand>
        <name>ATP</name>
        <dbReference type="ChEBI" id="CHEBI:30616"/>
    </ligand>
</feature>
<keyword id="KW-0067">ATP-binding</keyword>
<keyword id="KW-0963">Cytoplasm</keyword>
<keyword id="KW-0324">Glycolysis</keyword>
<keyword id="KW-0418">Kinase</keyword>
<keyword id="KW-0547">Nucleotide-binding</keyword>
<keyword id="KW-0808">Transferase</keyword>
<gene>
    <name evidence="1" type="primary">pgk</name>
    <name type="ordered locus">BUAP5A_443</name>
</gene>
<dbReference type="EC" id="2.7.2.3" evidence="1"/>
<dbReference type="EMBL" id="CP001161">
    <property type="protein sequence ID" value="ACL30799.1"/>
    <property type="molecule type" value="Genomic_DNA"/>
</dbReference>
<dbReference type="RefSeq" id="WP_009874404.1">
    <property type="nucleotide sequence ID" value="NC_011833.1"/>
</dbReference>
<dbReference type="SMR" id="B8D9M8"/>
<dbReference type="KEGG" id="bap:BUAP5A_443"/>
<dbReference type="HOGENOM" id="CLU_025427_0_2_6"/>
<dbReference type="OrthoDB" id="9808460at2"/>
<dbReference type="UniPathway" id="UPA00109">
    <property type="reaction ID" value="UER00185"/>
</dbReference>
<dbReference type="Proteomes" id="UP000006904">
    <property type="component" value="Chromosome"/>
</dbReference>
<dbReference type="GO" id="GO:0005829">
    <property type="term" value="C:cytosol"/>
    <property type="evidence" value="ECO:0007669"/>
    <property type="project" value="TreeGrafter"/>
</dbReference>
<dbReference type="GO" id="GO:0043531">
    <property type="term" value="F:ADP binding"/>
    <property type="evidence" value="ECO:0007669"/>
    <property type="project" value="TreeGrafter"/>
</dbReference>
<dbReference type="GO" id="GO:0005524">
    <property type="term" value="F:ATP binding"/>
    <property type="evidence" value="ECO:0007669"/>
    <property type="project" value="UniProtKB-KW"/>
</dbReference>
<dbReference type="GO" id="GO:0004618">
    <property type="term" value="F:phosphoglycerate kinase activity"/>
    <property type="evidence" value="ECO:0007669"/>
    <property type="project" value="UniProtKB-UniRule"/>
</dbReference>
<dbReference type="GO" id="GO:0006094">
    <property type="term" value="P:gluconeogenesis"/>
    <property type="evidence" value="ECO:0007669"/>
    <property type="project" value="TreeGrafter"/>
</dbReference>
<dbReference type="GO" id="GO:0006096">
    <property type="term" value="P:glycolytic process"/>
    <property type="evidence" value="ECO:0007669"/>
    <property type="project" value="UniProtKB-UniRule"/>
</dbReference>
<dbReference type="FunFam" id="3.40.50.1260:FF:000002">
    <property type="entry name" value="Phosphoglycerate kinase"/>
    <property type="match status" value="1"/>
</dbReference>
<dbReference type="FunFam" id="3.40.50.1260:FF:000031">
    <property type="entry name" value="Phosphoglycerate kinase 1"/>
    <property type="match status" value="1"/>
</dbReference>
<dbReference type="Gene3D" id="3.40.50.1260">
    <property type="entry name" value="Phosphoglycerate kinase, N-terminal domain"/>
    <property type="match status" value="2"/>
</dbReference>
<dbReference type="HAMAP" id="MF_00145">
    <property type="entry name" value="Phosphoglyc_kinase"/>
    <property type="match status" value="1"/>
</dbReference>
<dbReference type="InterPro" id="IPR001576">
    <property type="entry name" value="Phosphoglycerate_kinase"/>
</dbReference>
<dbReference type="InterPro" id="IPR015824">
    <property type="entry name" value="Phosphoglycerate_kinase_N"/>
</dbReference>
<dbReference type="InterPro" id="IPR036043">
    <property type="entry name" value="Phosphoglycerate_kinase_sf"/>
</dbReference>
<dbReference type="PANTHER" id="PTHR11406">
    <property type="entry name" value="PHOSPHOGLYCERATE KINASE"/>
    <property type="match status" value="1"/>
</dbReference>
<dbReference type="PANTHER" id="PTHR11406:SF23">
    <property type="entry name" value="PHOSPHOGLYCERATE KINASE 1, CHLOROPLASTIC-RELATED"/>
    <property type="match status" value="1"/>
</dbReference>
<dbReference type="Pfam" id="PF00162">
    <property type="entry name" value="PGK"/>
    <property type="match status" value="1"/>
</dbReference>
<dbReference type="PIRSF" id="PIRSF000724">
    <property type="entry name" value="Pgk"/>
    <property type="match status" value="1"/>
</dbReference>
<dbReference type="PRINTS" id="PR00477">
    <property type="entry name" value="PHGLYCKINASE"/>
</dbReference>
<dbReference type="SUPFAM" id="SSF53748">
    <property type="entry name" value="Phosphoglycerate kinase"/>
    <property type="match status" value="1"/>
</dbReference>
<reference key="1">
    <citation type="journal article" date="2009" name="Science">
        <title>The dynamics and time scale of ongoing genomic erosion in symbiotic bacteria.</title>
        <authorList>
            <person name="Moran N.A."/>
            <person name="McLaughlin H.J."/>
            <person name="Sorek R."/>
        </authorList>
    </citation>
    <scope>NUCLEOTIDE SEQUENCE [LARGE SCALE GENOMIC DNA]</scope>
    <source>
        <strain>5A</strain>
    </source>
</reference>
<proteinExistence type="inferred from homology"/>
<organism>
    <name type="scientific">Buchnera aphidicola subsp. Acyrthosiphon pisum (strain 5A)</name>
    <dbReference type="NCBI Taxonomy" id="563178"/>
    <lineage>
        <taxon>Bacteria</taxon>
        <taxon>Pseudomonadati</taxon>
        <taxon>Pseudomonadota</taxon>
        <taxon>Gammaproteobacteria</taxon>
        <taxon>Enterobacterales</taxon>
        <taxon>Erwiniaceae</taxon>
        <taxon>Buchnera</taxon>
    </lineage>
</organism>
<protein>
    <recommendedName>
        <fullName evidence="1">Phosphoglycerate kinase</fullName>
        <ecNumber evidence="1">2.7.2.3</ecNumber>
    </recommendedName>
</protein>